<dbReference type="EC" id="3.1.3.5" evidence="1"/>
<dbReference type="EMBL" id="CP001634">
    <property type="protein sequence ID" value="ACR79458.1"/>
    <property type="molecule type" value="Genomic_DNA"/>
</dbReference>
<dbReference type="RefSeq" id="WP_015868124.1">
    <property type="nucleotide sequence ID" value="NC_012785.1"/>
</dbReference>
<dbReference type="SMR" id="C5CG17"/>
<dbReference type="STRING" id="521045.Kole_0744"/>
<dbReference type="KEGG" id="kol:Kole_0744"/>
<dbReference type="eggNOG" id="COG0496">
    <property type="taxonomic scope" value="Bacteria"/>
</dbReference>
<dbReference type="HOGENOM" id="CLU_045192_1_3_0"/>
<dbReference type="OrthoDB" id="9780815at2"/>
<dbReference type="Proteomes" id="UP000002382">
    <property type="component" value="Chromosome"/>
</dbReference>
<dbReference type="GO" id="GO:0005737">
    <property type="term" value="C:cytoplasm"/>
    <property type="evidence" value="ECO:0007669"/>
    <property type="project" value="UniProtKB-SubCell"/>
</dbReference>
<dbReference type="GO" id="GO:0008254">
    <property type="term" value="F:3'-nucleotidase activity"/>
    <property type="evidence" value="ECO:0007669"/>
    <property type="project" value="TreeGrafter"/>
</dbReference>
<dbReference type="GO" id="GO:0008253">
    <property type="term" value="F:5'-nucleotidase activity"/>
    <property type="evidence" value="ECO:0007669"/>
    <property type="project" value="UniProtKB-UniRule"/>
</dbReference>
<dbReference type="GO" id="GO:0004309">
    <property type="term" value="F:exopolyphosphatase activity"/>
    <property type="evidence" value="ECO:0007669"/>
    <property type="project" value="TreeGrafter"/>
</dbReference>
<dbReference type="GO" id="GO:0046872">
    <property type="term" value="F:metal ion binding"/>
    <property type="evidence" value="ECO:0007669"/>
    <property type="project" value="UniProtKB-UniRule"/>
</dbReference>
<dbReference type="GO" id="GO:0000166">
    <property type="term" value="F:nucleotide binding"/>
    <property type="evidence" value="ECO:0007669"/>
    <property type="project" value="UniProtKB-KW"/>
</dbReference>
<dbReference type="FunFam" id="3.40.1210.10:FF:000001">
    <property type="entry name" value="5'/3'-nucleotidase SurE"/>
    <property type="match status" value="1"/>
</dbReference>
<dbReference type="Gene3D" id="3.40.1210.10">
    <property type="entry name" value="Survival protein SurE-like phosphatase/nucleotidase"/>
    <property type="match status" value="1"/>
</dbReference>
<dbReference type="HAMAP" id="MF_00060">
    <property type="entry name" value="SurE"/>
    <property type="match status" value="1"/>
</dbReference>
<dbReference type="InterPro" id="IPR030048">
    <property type="entry name" value="SurE"/>
</dbReference>
<dbReference type="InterPro" id="IPR002828">
    <property type="entry name" value="SurE-like_Pase/nucleotidase"/>
</dbReference>
<dbReference type="InterPro" id="IPR036523">
    <property type="entry name" value="SurE-like_sf"/>
</dbReference>
<dbReference type="NCBIfam" id="NF001490">
    <property type="entry name" value="PRK00346.1-4"/>
    <property type="match status" value="1"/>
</dbReference>
<dbReference type="NCBIfam" id="NF001492">
    <property type="entry name" value="PRK00346.2-2"/>
    <property type="match status" value="1"/>
</dbReference>
<dbReference type="NCBIfam" id="NF010545">
    <property type="entry name" value="PRK13935.1"/>
    <property type="match status" value="1"/>
</dbReference>
<dbReference type="NCBIfam" id="TIGR00087">
    <property type="entry name" value="surE"/>
    <property type="match status" value="1"/>
</dbReference>
<dbReference type="PANTHER" id="PTHR30457">
    <property type="entry name" value="5'-NUCLEOTIDASE SURE"/>
    <property type="match status" value="1"/>
</dbReference>
<dbReference type="PANTHER" id="PTHR30457:SF12">
    <property type="entry name" value="5'_3'-NUCLEOTIDASE SURE"/>
    <property type="match status" value="1"/>
</dbReference>
<dbReference type="Pfam" id="PF01975">
    <property type="entry name" value="SurE"/>
    <property type="match status" value="1"/>
</dbReference>
<dbReference type="SUPFAM" id="SSF64167">
    <property type="entry name" value="SurE-like"/>
    <property type="match status" value="1"/>
</dbReference>
<organism>
    <name type="scientific">Kosmotoga olearia (strain ATCC BAA-1733 / DSM 21960 / TBF 19.5.1)</name>
    <dbReference type="NCBI Taxonomy" id="521045"/>
    <lineage>
        <taxon>Bacteria</taxon>
        <taxon>Thermotogati</taxon>
        <taxon>Thermotogota</taxon>
        <taxon>Thermotogae</taxon>
        <taxon>Kosmotogales</taxon>
        <taxon>Kosmotogaceae</taxon>
        <taxon>Kosmotoga</taxon>
    </lineage>
</organism>
<evidence type="ECO:0000255" key="1">
    <source>
        <dbReference type="HAMAP-Rule" id="MF_00060"/>
    </source>
</evidence>
<comment type="function">
    <text evidence="1">Nucleotidase that shows phosphatase activity on nucleoside 5'-monophosphates.</text>
</comment>
<comment type="catalytic activity">
    <reaction evidence="1">
        <text>a ribonucleoside 5'-phosphate + H2O = a ribonucleoside + phosphate</text>
        <dbReference type="Rhea" id="RHEA:12484"/>
        <dbReference type="ChEBI" id="CHEBI:15377"/>
        <dbReference type="ChEBI" id="CHEBI:18254"/>
        <dbReference type="ChEBI" id="CHEBI:43474"/>
        <dbReference type="ChEBI" id="CHEBI:58043"/>
        <dbReference type="EC" id="3.1.3.5"/>
    </reaction>
</comment>
<comment type="cofactor">
    <cofactor evidence="1">
        <name>a divalent metal cation</name>
        <dbReference type="ChEBI" id="CHEBI:60240"/>
    </cofactor>
    <text evidence="1">Binds 1 divalent metal cation per subunit.</text>
</comment>
<comment type="subcellular location">
    <subcellularLocation>
        <location evidence="1">Cytoplasm</location>
    </subcellularLocation>
</comment>
<comment type="similarity">
    <text evidence="1">Belongs to the SurE nucleotidase family.</text>
</comment>
<accession>C5CG17</accession>
<gene>
    <name evidence="1" type="primary">surE</name>
    <name type="ordered locus">Kole_0744</name>
</gene>
<name>SURE_KOSOT</name>
<feature type="chain" id="PRO_1000202370" description="5'-nucleotidase SurE">
    <location>
        <begin position="1"/>
        <end position="253"/>
    </location>
</feature>
<feature type="binding site" evidence="1">
    <location>
        <position position="8"/>
    </location>
    <ligand>
        <name>a divalent metal cation</name>
        <dbReference type="ChEBI" id="CHEBI:60240"/>
    </ligand>
</feature>
<feature type="binding site" evidence="1">
    <location>
        <position position="9"/>
    </location>
    <ligand>
        <name>a divalent metal cation</name>
        <dbReference type="ChEBI" id="CHEBI:60240"/>
    </ligand>
</feature>
<feature type="binding site" evidence="1">
    <location>
        <position position="39"/>
    </location>
    <ligand>
        <name>a divalent metal cation</name>
        <dbReference type="ChEBI" id="CHEBI:60240"/>
    </ligand>
</feature>
<feature type="binding site" evidence="1">
    <location>
        <position position="95"/>
    </location>
    <ligand>
        <name>a divalent metal cation</name>
        <dbReference type="ChEBI" id="CHEBI:60240"/>
    </ligand>
</feature>
<protein>
    <recommendedName>
        <fullName evidence="1">5'-nucleotidase SurE</fullName>
        <ecNumber evidence="1">3.1.3.5</ecNumber>
    </recommendedName>
    <alternativeName>
        <fullName evidence="1">Nucleoside 5'-monophosphate phosphohydrolase</fullName>
    </alternativeName>
</protein>
<reference key="1">
    <citation type="submission" date="2009-06" db="EMBL/GenBank/DDBJ databases">
        <title>Complete sequence of Thermotogales bacterium TBF 19.5.1.</title>
        <authorList>
            <consortium name="US DOE Joint Genome Institute"/>
            <person name="Lucas S."/>
            <person name="Copeland A."/>
            <person name="Lapidus A."/>
            <person name="Glavina del Rio T."/>
            <person name="Tice H."/>
            <person name="Bruce D."/>
            <person name="Goodwin L."/>
            <person name="Pitluck S."/>
            <person name="Chertkov O."/>
            <person name="Brettin T."/>
            <person name="Detter J.C."/>
            <person name="Han C."/>
            <person name="Schmutz J."/>
            <person name="Larimer F."/>
            <person name="Land M."/>
            <person name="Hauser L."/>
            <person name="Kyrpides N."/>
            <person name="Ovchinnikova G."/>
            <person name="Noll K."/>
        </authorList>
    </citation>
    <scope>NUCLEOTIDE SEQUENCE [LARGE SCALE GENOMIC DNA]</scope>
    <source>
        <strain>ATCC BAA-1733 / DSM 21960 / TBF 19.5.1</strain>
    </source>
</reference>
<sequence length="253" mass="28139">MNILVTNDDGIMAPGINILAQKLAEKHSVLVVAPDVERSATGHAITIRTPLWAKEVKVGEKTVGYAINGTPADCVKLGILAIADFEIELVVSGINKGPNLGTDILYSGTVSGALEGAVMEKPSIAISAADWNNPKYETAAEFLLEFLDTYDVTKMPEFTALNINVPSVDRAELKGWKVTRQSRRRYRDYFEKRKDPYGNNYYWMFGEIIEDDPGEDSDYAAVRRNYVSITPIYAFMTNQNYMPKLKEELEGGN</sequence>
<proteinExistence type="inferred from homology"/>
<keyword id="KW-0963">Cytoplasm</keyword>
<keyword id="KW-0378">Hydrolase</keyword>
<keyword id="KW-0479">Metal-binding</keyword>
<keyword id="KW-0547">Nucleotide-binding</keyword>
<keyword id="KW-1185">Reference proteome</keyword>